<sequence length="360" mass="39869">MLPQEKLDLILRRYDEVSARLNEAVEPALYVQLSREFAGLEQVAAAIRDYRSQMQEVEGLAAMLADPTTDSEMRGLAEEELRDAKERLEALEHQLKIALLPKDAADERSAILEVRAGTGGDEAALFAGDLFRMYQRYAESKGWSVEIISANEGAAGGFKEIIAEIAGRGVFAKLKFESGAHRVQRVPDTETQGRIHTSAATVAVLPEAQEVDVEINEADLKIDTMRAQGAGGQHVNKTESAIRITHIPTGTIVFVQDERSQHKNRARAMALLRSRIYDEQRQKLDAERAADRRSQVGSGDRSERIRTYNFPQGRVTDHRINLTLYKLDKVITGEALDEVIDALTTHHQAALLADSESGGL</sequence>
<gene>
    <name evidence="1" type="primary">prfA</name>
    <name type="ordered locus">Msil_1564</name>
</gene>
<dbReference type="EMBL" id="CP001280">
    <property type="protein sequence ID" value="ACK50514.1"/>
    <property type="molecule type" value="Genomic_DNA"/>
</dbReference>
<dbReference type="RefSeq" id="WP_012590584.1">
    <property type="nucleotide sequence ID" value="NC_011666.1"/>
</dbReference>
<dbReference type="SMR" id="B8EI32"/>
<dbReference type="STRING" id="395965.Msil_1564"/>
<dbReference type="KEGG" id="msl:Msil_1564"/>
<dbReference type="eggNOG" id="COG0216">
    <property type="taxonomic scope" value="Bacteria"/>
</dbReference>
<dbReference type="HOGENOM" id="CLU_036856_0_1_5"/>
<dbReference type="OrthoDB" id="9806673at2"/>
<dbReference type="Proteomes" id="UP000002257">
    <property type="component" value="Chromosome"/>
</dbReference>
<dbReference type="GO" id="GO:0005737">
    <property type="term" value="C:cytoplasm"/>
    <property type="evidence" value="ECO:0007669"/>
    <property type="project" value="UniProtKB-SubCell"/>
</dbReference>
<dbReference type="GO" id="GO:0016149">
    <property type="term" value="F:translation release factor activity, codon specific"/>
    <property type="evidence" value="ECO:0007669"/>
    <property type="project" value="UniProtKB-UniRule"/>
</dbReference>
<dbReference type="FunFam" id="3.30.160.20:FF:000004">
    <property type="entry name" value="Peptide chain release factor 1"/>
    <property type="match status" value="1"/>
</dbReference>
<dbReference type="FunFam" id="3.30.70.1660:FF:000002">
    <property type="entry name" value="Peptide chain release factor 1"/>
    <property type="match status" value="1"/>
</dbReference>
<dbReference type="FunFam" id="3.30.70.1660:FF:000004">
    <property type="entry name" value="Peptide chain release factor 1"/>
    <property type="match status" value="1"/>
</dbReference>
<dbReference type="Gene3D" id="3.30.160.20">
    <property type="match status" value="1"/>
</dbReference>
<dbReference type="Gene3D" id="3.30.70.1660">
    <property type="match status" value="2"/>
</dbReference>
<dbReference type="Gene3D" id="6.10.140.1950">
    <property type="match status" value="1"/>
</dbReference>
<dbReference type="HAMAP" id="MF_00093">
    <property type="entry name" value="Rel_fac_1"/>
    <property type="match status" value="1"/>
</dbReference>
<dbReference type="InterPro" id="IPR005139">
    <property type="entry name" value="PCRF"/>
</dbReference>
<dbReference type="InterPro" id="IPR000352">
    <property type="entry name" value="Pep_chain_release_fac_I"/>
</dbReference>
<dbReference type="InterPro" id="IPR045853">
    <property type="entry name" value="Pep_chain_release_fac_I_sf"/>
</dbReference>
<dbReference type="InterPro" id="IPR050057">
    <property type="entry name" value="Prokaryotic/Mito_RF"/>
</dbReference>
<dbReference type="InterPro" id="IPR004373">
    <property type="entry name" value="RF-1"/>
</dbReference>
<dbReference type="NCBIfam" id="TIGR00019">
    <property type="entry name" value="prfA"/>
    <property type="match status" value="1"/>
</dbReference>
<dbReference type="NCBIfam" id="NF001859">
    <property type="entry name" value="PRK00591.1"/>
    <property type="match status" value="1"/>
</dbReference>
<dbReference type="PANTHER" id="PTHR43804">
    <property type="entry name" value="LD18447P"/>
    <property type="match status" value="1"/>
</dbReference>
<dbReference type="PANTHER" id="PTHR43804:SF7">
    <property type="entry name" value="LD18447P"/>
    <property type="match status" value="1"/>
</dbReference>
<dbReference type="Pfam" id="PF03462">
    <property type="entry name" value="PCRF"/>
    <property type="match status" value="1"/>
</dbReference>
<dbReference type="Pfam" id="PF00472">
    <property type="entry name" value="RF-1"/>
    <property type="match status" value="1"/>
</dbReference>
<dbReference type="SMART" id="SM00937">
    <property type="entry name" value="PCRF"/>
    <property type="match status" value="1"/>
</dbReference>
<dbReference type="SUPFAM" id="SSF75620">
    <property type="entry name" value="Release factor"/>
    <property type="match status" value="1"/>
</dbReference>
<dbReference type="PROSITE" id="PS00745">
    <property type="entry name" value="RF_PROK_I"/>
    <property type="match status" value="1"/>
</dbReference>
<proteinExistence type="inferred from homology"/>
<keyword id="KW-0963">Cytoplasm</keyword>
<keyword id="KW-0488">Methylation</keyword>
<keyword id="KW-0648">Protein biosynthesis</keyword>
<keyword id="KW-1185">Reference proteome</keyword>
<evidence type="ECO:0000255" key="1">
    <source>
        <dbReference type="HAMAP-Rule" id="MF_00093"/>
    </source>
</evidence>
<evidence type="ECO:0000256" key="2">
    <source>
        <dbReference type="SAM" id="MobiDB-lite"/>
    </source>
</evidence>
<comment type="function">
    <text evidence="1">Peptide chain release factor 1 directs the termination of translation in response to the peptide chain termination codons UAG and UAA.</text>
</comment>
<comment type="subcellular location">
    <subcellularLocation>
        <location evidence="1">Cytoplasm</location>
    </subcellularLocation>
</comment>
<comment type="PTM">
    <text evidence="1">Methylated by PrmC. Methylation increases the termination efficiency of RF1.</text>
</comment>
<comment type="similarity">
    <text evidence="1">Belongs to the prokaryotic/mitochondrial release factor family.</text>
</comment>
<accession>B8EI32</accession>
<reference key="1">
    <citation type="journal article" date="2010" name="J. Bacteriol.">
        <title>Complete genome sequence of the aerobic facultative methanotroph Methylocella silvestris BL2.</title>
        <authorList>
            <person name="Chen Y."/>
            <person name="Crombie A."/>
            <person name="Rahman M.T."/>
            <person name="Dedysh S.N."/>
            <person name="Liesack W."/>
            <person name="Stott M.B."/>
            <person name="Alam M."/>
            <person name="Theisen A.R."/>
            <person name="Murrell J.C."/>
            <person name="Dunfield P.F."/>
        </authorList>
    </citation>
    <scope>NUCLEOTIDE SEQUENCE [LARGE SCALE GENOMIC DNA]</scope>
    <source>
        <strain>DSM 15510 / CIP 108128 / LMG 27833 / NCIMB 13906 / BL2</strain>
    </source>
</reference>
<protein>
    <recommendedName>
        <fullName evidence="1">Peptide chain release factor 1</fullName>
        <shortName evidence="1">RF-1</shortName>
    </recommendedName>
</protein>
<organism>
    <name type="scientific">Methylocella silvestris (strain DSM 15510 / CIP 108128 / LMG 27833 / NCIMB 13906 / BL2)</name>
    <dbReference type="NCBI Taxonomy" id="395965"/>
    <lineage>
        <taxon>Bacteria</taxon>
        <taxon>Pseudomonadati</taxon>
        <taxon>Pseudomonadota</taxon>
        <taxon>Alphaproteobacteria</taxon>
        <taxon>Hyphomicrobiales</taxon>
        <taxon>Beijerinckiaceae</taxon>
        <taxon>Methylocella</taxon>
    </lineage>
</organism>
<name>RF1_METSB</name>
<feature type="chain" id="PRO_1000193497" description="Peptide chain release factor 1">
    <location>
        <begin position="1"/>
        <end position="360"/>
    </location>
</feature>
<feature type="region of interest" description="Disordered" evidence="2">
    <location>
        <begin position="283"/>
        <end position="305"/>
    </location>
</feature>
<feature type="modified residue" description="N5-methylglutamine" evidence="1">
    <location>
        <position position="233"/>
    </location>
</feature>